<keyword id="KW-0961">Cell wall biogenesis/degradation</keyword>
<keyword id="KW-0328">Glycosyltransferase</keyword>
<keyword id="KW-0333">Golgi apparatus</keyword>
<keyword id="KW-0472">Membrane</keyword>
<keyword id="KW-1185">Reference proteome</keyword>
<keyword id="KW-0808">Transferase</keyword>
<keyword id="KW-0812">Transmembrane</keyword>
<keyword id="KW-1133">Transmembrane helix</keyword>
<dbReference type="EC" id="2.4.1.-"/>
<dbReference type="EMBL" id="CM000132">
    <property type="protein sequence ID" value="EAZ04286.1"/>
    <property type="molecule type" value="Genomic_DNA"/>
</dbReference>
<dbReference type="SMR" id="A2YMH5"/>
<dbReference type="STRING" id="39946.A2YMH5"/>
<dbReference type="EnsemblPlants" id="BGIOSGA024117-TA">
    <property type="protein sequence ID" value="BGIOSGA024117-PA"/>
    <property type="gene ID" value="BGIOSGA024117"/>
</dbReference>
<dbReference type="Gramene" id="BGIOSGA024117-TA">
    <property type="protein sequence ID" value="BGIOSGA024117-PA"/>
    <property type="gene ID" value="BGIOSGA024117"/>
</dbReference>
<dbReference type="HOGENOM" id="CLU_001418_3_1_1"/>
<dbReference type="OMA" id="PESYFEM"/>
<dbReference type="Proteomes" id="UP000007015">
    <property type="component" value="Chromosome 7"/>
</dbReference>
<dbReference type="GO" id="GO:0000139">
    <property type="term" value="C:Golgi membrane"/>
    <property type="evidence" value="ECO:0007669"/>
    <property type="project" value="UniProtKB-SubCell"/>
</dbReference>
<dbReference type="GO" id="GO:0016760">
    <property type="term" value="F:cellulose synthase (UDP-forming) activity"/>
    <property type="evidence" value="ECO:0007669"/>
    <property type="project" value="InterPro"/>
</dbReference>
<dbReference type="GO" id="GO:0071555">
    <property type="term" value="P:cell wall organization"/>
    <property type="evidence" value="ECO:0007669"/>
    <property type="project" value="UniProtKB-KW"/>
</dbReference>
<dbReference type="GO" id="GO:0030244">
    <property type="term" value="P:cellulose biosynthetic process"/>
    <property type="evidence" value="ECO:0007669"/>
    <property type="project" value="InterPro"/>
</dbReference>
<dbReference type="GO" id="GO:0071669">
    <property type="term" value="P:plant-type cell wall organization or biogenesis"/>
    <property type="evidence" value="ECO:0007669"/>
    <property type="project" value="UniProtKB-ARBA"/>
</dbReference>
<dbReference type="FunFam" id="3.90.550.10:FF:000027">
    <property type="entry name" value="Cellulose synthase-like protein D4"/>
    <property type="match status" value="1"/>
</dbReference>
<dbReference type="Gene3D" id="3.90.550.10">
    <property type="entry name" value="Spore Coat Polysaccharide Biosynthesis Protein SpsA, Chain A"/>
    <property type="match status" value="1"/>
</dbReference>
<dbReference type="InterPro" id="IPR005150">
    <property type="entry name" value="Cellulose_synth"/>
</dbReference>
<dbReference type="InterPro" id="IPR029044">
    <property type="entry name" value="Nucleotide-diphossugar_trans"/>
</dbReference>
<dbReference type="PANTHER" id="PTHR13301">
    <property type="entry name" value="X-BOX TRANSCRIPTION FACTOR-RELATED"/>
    <property type="match status" value="1"/>
</dbReference>
<dbReference type="Pfam" id="PF03552">
    <property type="entry name" value="Cellulose_synt"/>
    <property type="match status" value="2"/>
</dbReference>
<dbReference type="SUPFAM" id="SSF53448">
    <property type="entry name" value="Nucleotide-diphospho-sugar transferases"/>
    <property type="match status" value="1"/>
</dbReference>
<evidence type="ECO:0000250" key="1"/>
<evidence type="ECO:0000255" key="2"/>
<evidence type="ECO:0000256" key="3">
    <source>
        <dbReference type="SAM" id="MobiDB-lite"/>
    </source>
</evidence>
<evidence type="ECO:0000305" key="4"/>
<comment type="function">
    <text evidence="1">May catalyze both beta-1,3 and beta-1,4 glycosidic linkage on beta-D-glucan. Essential for (1,3;1,4)-beta-D-glucans synthesis in grasses and cereals (Poaceae). The mixed-linked glucans (which are not present in walls of dicotyledons or most other monocotyledonous plants) are particularly important constituents of the walls of the starchy endosperm and aleurone cells of cereal grains such as oats, wheat, rice and barley. They can account for up to 70% by weight of the wall (By similarity).</text>
</comment>
<comment type="subcellular location">
    <subcellularLocation>
        <location evidence="4">Golgi apparatus membrane</location>
        <topology evidence="4">Multi-pass membrane protein</topology>
    </subcellularLocation>
</comment>
<comment type="similarity">
    <text evidence="4">Belongs to the glycosyltransferase 2 family. Plant cellulose synthase-like F subfamily.</text>
</comment>
<proteinExistence type="inferred from homology"/>
<reference key="1">
    <citation type="journal article" date="2005" name="PLoS Biol.">
        <title>The genomes of Oryza sativa: a history of duplications.</title>
        <authorList>
            <person name="Yu J."/>
            <person name="Wang J."/>
            <person name="Lin W."/>
            <person name="Li S."/>
            <person name="Li H."/>
            <person name="Zhou J."/>
            <person name="Ni P."/>
            <person name="Dong W."/>
            <person name="Hu S."/>
            <person name="Zeng C."/>
            <person name="Zhang J."/>
            <person name="Zhang Y."/>
            <person name="Li R."/>
            <person name="Xu Z."/>
            <person name="Li S."/>
            <person name="Li X."/>
            <person name="Zheng H."/>
            <person name="Cong L."/>
            <person name="Lin L."/>
            <person name="Yin J."/>
            <person name="Geng J."/>
            <person name="Li G."/>
            <person name="Shi J."/>
            <person name="Liu J."/>
            <person name="Lv H."/>
            <person name="Li J."/>
            <person name="Wang J."/>
            <person name="Deng Y."/>
            <person name="Ran L."/>
            <person name="Shi X."/>
            <person name="Wang X."/>
            <person name="Wu Q."/>
            <person name="Li C."/>
            <person name="Ren X."/>
            <person name="Wang J."/>
            <person name="Wang X."/>
            <person name="Li D."/>
            <person name="Liu D."/>
            <person name="Zhang X."/>
            <person name="Ji Z."/>
            <person name="Zhao W."/>
            <person name="Sun Y."/>
            <person name="Zhang Z."/>
            <person name="Bao J."/>
            <person name="Han Y."/>
            <person name="Dong L."/>
            <person name="Ji J."/>
            <person name="Chen P."/>
            <person name="Wu S."/>
            <person name="Liu J."/>
            <person name="Xiao Y."/>
            <person name="Bu D."/>
            <person name="Tan J."/>
            <person name="Yang L."/>
            <person name="Ye C."/>
            <person name="Zhang J."/>
            <person name="Xu J."/>
            <person name="Zhou Y."/>
            <person name="Yu Y."/>
            <person name="Zhang B."/>
            <person name="Zhuang S."/>
            <person name="Wei H."/>
            <person name="Liu B."/>
            <person name="Lei M."/>
            <person name="Yu H."/>
            <person name="Li Y."/>
            <person name="Xu H."/>
            <person name="Wei S."/>
            <person name="He X."/>
            <person name="Fang L."/>
            <person name="Zhang Z."/>
            <person name="Zhang Y."/>
            <person name="Huang X."/>
            <person name="Su Z."/>
            <person name="Tong W."/>
            <person name="Li J."/>
            <person name="Tong Z."/>
            <person name="Li S."/>
            <person name="Ye J."/>
            <person name="Wang L."/>
            <person name="Fang L."/>
            <person name="Lei T."/>
            <person name="Chen C.-S."/>
            <person name="Chen H.-C."/>
            <person name="Xu Z."/>
            <person name="Li H."/>
            <person name="Huang H."/>
            <person name="Zhang F."/>
            <person name="Xu H."/>
            <person name="Li N."/>
            <person name="Zhao C."/>
            <person name="Li S."/>
            <person name="Dong L."/>
            <person name="Huang Y."/>
            <person name="Li L."/>
            <person name="Xi Y."/>
            <person name="Qi Q."/>
            <person name="Li W."/>
            <person name="Zhang B."/>
            <person name="Hu W."/>
            <person name="Zhang Y."/>
            <person name="Tian X."/>
            <person name="Jiao Y."/>
            <person name="Liang X."/>
            <person name="Jin J."/>
            <person name="Gao L."/>
            <person name="Zheng W."/>
            <person name="Hao B."/>
            <person name="Liu S.-M."/>
            <person name="Wang W."/>
            <person name="Yuan L."/>
            <person name="Cao M."/>
            <person name="McDermott J."/>
            <person name="Samudrala R."/>
            <person name="Wang J."/>
            <person name="Wong G.K.-S."/>
            <person name="Yang H."/>
        </authorList>
    </citation>
    <scope>NUCLEOTIDE SEQUENCE [LARGE SCALE GENOMIC DNA]</scope>
    <source>
        <strain>cv. 93-11</strain>
    </source>
</reference>
<reference key="2">
    <citation type="journal article" date="2002" name="Plant Physiol.">
        <title>Cellulose synthase-like genes of rice.</title>
        <authorList>
            <person name="Hazen S.P."/>
            <person name="Scott-Craig J.S."/>
            <person name="Walton J.D."/>
        </authorList>
    </citation>
    <scope>GENE FAMILY</scope>
    <scope>NOMENCLATURE</scope>
</reference>
<sequence>MASPASVAGGGEDSNGCSSLIDPLLVSRTSSIGGAERKAAGGGGGGAKGKHWAAADKGERRAAKECGGEDGRRPLLFRSYRVKGSLLHPYRALIFARLIAVLLFFGWRIRHNNSDIMWFWTMSVAGDVWFGFSWLLNQLPKFNPVKTIPDLTALRQYCDLADGSYRLPGIDVFVTTADPIDEPVLYTMNCVLSILAADYPVDRSACYLSDDSGALILYEALVETAKFATLWVPFCRKHCIEPRSPESYFELEAPSYTGSAQEEFKNDSRIVHLEYDEFKVRLEALPETIRKRSDVYNSMKTDQGAPNATWMANGTQWPGTWIEPIENHRKGHHAGIVKVVLDHPIRGHNLSLKDSTGNNLNFNATDVRIPMLVYVSRGKNPNYDHNKKAGALNAQLRASALLSNAQFIINFDCDHYINNSQALRAAICFMLDQREGDNTAFVQFPQRFDNVDPKDRYGNHNRVFFDGTMLALNGLQGPSYLGTGCMFRRLALYGIDPPHWRQDNITPESSKFGNSILLLESVLEALNQDRFATPSPVNDIFVNELEMVVSASFDKETDWGKGVGYIYDIATEDIVTGFRIHGQGWRSMYCTMEHDAFCGTAPINLTERLHQIVRWSGGSLEMFFSHNNPLIGGRRLQPLQRVSYLNMTIYPVTSLFILLYAISPVMWLIPDEVYIQRPFTRYVVYLLMIILMIHMIGWLEIKWAGITWLDYWRNEQFFMIGSTSAYPTAVLHMVVNLLTKKGIHFRVTSKQTTADTNDKFADLYEMRWVPMLIPTMVVLVANIGAIGVAIGKMAVYMGVWTIAQKRHAIMGLLFNMWVMFLLYPFALAIMGRWAKRPIILVVLLPIIFVIVALVYVATHILLANIIPF</sequence>
<protein>
    <recommendedName>
        <fullName>Probable mixed-linked glucan synthase 3</fullName>
        <ecNumber>2.4.1.-</ecNumber>
    </recommendedName>
    <alternativeName>
        <fullName>1,3;1,4-beta-D-glucan synthase 3</fullName>
    </alternativeName>
    <alternativeName>
        <fullName>Cellulose synthase-like protein F3</fullName>
    </alternativeName>
    <alternativeName>
        <fullName>OsCslF3</fullName>
    </alternativeName>
</protein>
<feature type="chain" id="PRO_0000319403" description="Probable mixed-linked glucan synthase 3">
    <location>
        <begin position="1"/>
        <end position="868"/>
    </location>
</feature>
<feature type="transmembrane region" description="Helical" evidence="2">
    <location>
        <begin position="86"/>
        <end position="106"/>
    </location>
</feature>
<feature type="transmembrane region" description="Helical" evidence="2">
    <location>
        <begin position="116"/>
        <end position="136"/>
    </location>
</feature>
<feature type="transmembrane region" description="Helical" evidence="2">
    <location>
        <begin position="649"/>
        <end position="669"/>
    </location>
</feature>
<feature type="transmembrane region" description="Helical" evidence="2">
    <location>
        <begin position="686"/>
        <end position="706"/>
    </location>
</feature>
<feature type="transmembrane region" description="Helical" evidence="2">
    <location>
        <begin position="717"/>
        <end position="737"/>
    </location>
</feature>
<feature type="transmembrane region" description="Helical" evidence="2">
    <location>
        <begin position="771"/>
        <end position="791"/>
    </location>
</feature>
<feature type="transmembrane region" description="Helical" evidence="2">
    <location>
        <begin position="809"/>
        <end position="829"/>
    </location>
</feature>
<feature type="transmembrane region" description="Helical" evidence="2">
    <location>
        <begin position="837"/>
        <end position="857"/>
    </location>
</feature>
<feature type="region of interest" description="Disordered" evidence="3">
    <location>
        <begin position="36"/>
        <end position="68"/>
    </location>
</feature>
<feature type="compositionally biased region" description="Basic and acidic residues" evidence="3">
    <location>
        <begin position="53"/>
        <end position="68"/>
    </location>
</feature>
<feature type="active site" evidence="2">
    <location>
        <position position="211"/>
    </location>
</feature>
<feature type="active site" evidence="2">
    <location>
        <position position="573"/>
    </location>
</feature>
<feature type="binding site" evidence="2">
    <location>
        <position position="412"/>
    </location>
    <ligand>
        <name>substrate</name>
    </ligand>
</feature>
<feature type="binding site" evidence="2">
    <location>
        <position position="414"/>
    </location>
    <ligand>
        <name>substrate</name>
    </ligand>
</feature>
<organism>
    <name type="scientific">Oryza sativa subsp. indica</name>
    <name type="common">Rice</name>
    <dbReference type="NCBI Taxonomy" id="39946"/>
    <lineage>
        <taxon>Eukaryota</taxon>
        <taxon>Viridiplantae</taxon>
        <taxon>Streptophyta</taxon>
        <taxon>Embryophyta</taxon>
        <taxon>Tracheophyta</taxon>
        <taxon>Spermatophyta</taxon>
        <taxon>Magnoliopsida</taxon>
        <taxon>Liliopsida</taxon>
        <taxon>Poales</taxon>
        <taxon>Poaceae</taxon>
        <taxon>BOP clade</taxon>
        <taxon>Oryzoideae</taxon>
        <taxon>Oryzeae</taxon>
        <taxon>Oryzinae</taxon>
        <taxon>Oryza</taxon>
        <taxon>Oryza sativa</taxon>
    </lineage>
</organism>
<gene>
    <name type="primary">CSLF3</name>
    <name type="ORF">OsI_025518</name>
</gene>
<name>CSLF3_ORYSI</name>
<accession>A2YMH5</accession>